<feature type="chain" id="PRO_1000021192" description="4-hydroxy-3-methylbut-2-enyl diphosphate reductase">
    <location>
        <begin position="1"/>
        <end position="401"/>
    </location>
</feature>
<feature type="active site" description="Proton donor" evidence="1">
    <location>
        <position position="187"/>
    </location>
</feature>
<feature type="binding site" evidence="1">
    <location>
        <position position="66"/>
    </location>
    <ligand>
        <name>[4Fe-4S] cluster</name>
        <dbReference type="ChEBI" id="CHEBI:49883"/>
    </ligand>
</feature>
<feature type="binding site" evidence="1">
    <location>
        <position position="96"/>
    </location>
    <ligand>
        <name>(2E)-4-hydroxy-3-methylbut-2-enyl diphosphate</name>
        <dbReference type="ChEBI" id="CHEBI:128753"/>
    </ligand>
</feature>
<feature type="binding site" evidence="1">
    <location>
        <position position="96"/>
    </location>
    <ligand>
        <name>dimethylallyl diphosphate</name>
        <dbReference type="ChEBI" id="CHEBI:57623"/>
    </ligand>
</feature>
<feature type="binding site" evidence="1">
    <location>
        <position position="96"/>
    </location>
    <ligand>
        <name>isopentenyl diphosphate</name>
        <dbReference type="ChEBI" id="CHEBI:128769"/>
    </ligand>
</feature>
<feature type="binding site" evidence="1">
    <location>
        <position position="157"/>
    </location>
    <ligand>
        <name>[4Fe-4S] cluster</name>
        <dbReference type="ChEBI" id="CHEBI:49883"/>
    </ligand>
</feature>
<feature type="binding site" evidence="1">
    <location>
        <position position="185"/>
    </location>
    <ligand>
        <name>(2E)-4-hydroxy-3-methylbut-2-enyl diphosphate</name>
        <dbReference type="ChEBI" id="CHEBI:128753"/>
    </ligand>
</feature>
<feature type="binding site" evidence="1">
    <location>
        <position position="185"/>
    </location>
    <ligand>
        <name>dimethylallyl diphosphate</name>
        <dbReference type="ChEBI" id="CHEBI:57623"/>
    </ligand>
</feature>
<feature type="binding site" evidence="1">
    <location>
        <position position="185"/>
    </location>
    <ligand>
        <name>isopentenyl diphosphate</name>
        <dbReference type="ChEBI" id="CHEBI:128769"/>
    </ligand>
</feature>
<feature type="binding site" evidence="1">
    <location>
        <position position="250"/>
    </location>
    <ligand>
        <name>(2E)-4-hydroxy-3-methylbut-2-enyl diphosphate</name>
        <dbReference type="ChEBI" id="CHEBI:128753"/>
    </ligand>
</feature>
<feature type="binding site" evidence="1">
    <location>
        <position position="288"/>
    </location>
    <ligand>
        <name>[4Fe-4S] cluster</name>
        <dbReference type="ChEBI" id="CHEBI:49883"/>
    </ligand>
</feature>
<feature type="binding site" evidence="1">
    <location>
        <position position="317"/>
    </location>
    <ligand>
        <name>(2E)-4-hydroxy-3-methylbut-2-enyl diphosphate</name>
        <dbReference type="ChEBI" id="CHEBI:128753"/>
    </ligand>
</feature>
<feature type="binding site" evidence="1">
    <location>
        <position position="317"/>
    </location>
    <ligand>
        <name>dimethylallyl diphosphate</name>
        <dbReference type="ChEBI" id="CHEBI:57623"/>
    </ligand>
</feature>
<feature type="binding site" evidence="1">
    <location>
        <position position="317"/>
    </location>
    <ligand>
        <name>isopentenyl diphosphate</name>
        <dbReference type="ChEBI" id="CHEBI:128769"/>
    </ligand>
</feature>
<feature type="binding site" evidence="1">
    <location>
        <position position="318"/>
    </location>
    <ligand>
        <name>(2E)-4-hydroxy-3-methylbut-2-enyl diphosphate</name>
        <dbReference type="ChEBI" id="CHEBI:128753"/>
    </ligand>
</feature>
<feature type="binding site" evidence="1">
    <location>
        <position position="318"/>
    </location>
    <ligand>
        <name>dimethylallyl diphosphate</name>
        <dbReference type="ChEBI" id="CHEBI:57623"/>
    </ligand>
</feature>
<feature type="binding site" evidence="1">
    <location>
        <position position="318"/>
    </location>
    <ligand>
        <name>isopentenyl diphosphate</name>
        <dbReference type="ChEBI" id="CHEBI:128769"/>
    </ligand>
</feature>
<feature type="binding site" evidence="1">
    <location>
        <position position="319"/>
    </location>
    <ligand>
        <name>(2E)-4-hydroxy-3-methylbut-2-enyl diphosphate</name>
        <dbReference type="ChEBI" id="CHEBI:128753"/>
    </ligand>
</feature>
<feature type="binding site" evidence="1">
    <location>
        <position position="319"/>
    </location>
    <ligand>
        <name>dimethylallyl diphosphate</name>
        <dbReference type="ChEBI" id="CHEBI:57623"/>
    </ligand>
</feature>
<feature type="binding site" evidence="1">
    <location>
        <position position="319"/>
    </location>
    <ligand>
        <name>isopentenyl diphosphate</name>
        <dbReference type="ChEBI" id="CHEBI:128769"/>
    </ligand>
</feature>
<feature type="binding site" evidence="1">
    <location>
        <position position="379"/>
    </location>
    <ligand>
        <name>(2E)-4-hydroxy-3-methylbut-2-enyl diphosphate</name>
        <dbReference type="ChEBI" id="CHEBI:128753"/>
    </ligand>
</feature>
<feature type="binding site" evidence="1">
    <location>
        <position position="379"/>
    </location>
    <ligand>
        <name>dimethylallyl diphosphate</name>
        <dbReference type="ChEBI" id="CHEBI:57623"/>
    </ligand>
</feature>
<feature type="binding site" evidence="1">
    <location>
        <position position="379"/>
    </location>
    <ligand>
        <name>isopentenyl diphosphate</name>
        <dbReference type="ChEBI" id="CHEBI:128769"/>
    </ligand>
</feature>
<dbReference type="EC" id="1.17.7.4" evidence="1"/>
<dbReference type="EMBL" id="CP000393">
    <property type="protein sequence ID" value="ABG53466.1"/>
    <property type="molecule type" value="Genomic_DNA"/>
</dbReference>
<dbReference type="RefSeq" id="WP_011613788.1">
    <property type="nucleotide sequence ID" value="NC_008312.1"/>
</dbReference>
<dbReference type="SMR" id="Q10WA8"/>
<dbReference type="STRING" id="203124.Tery_4479"/>
<dbReference type="KEGG" id="ter:Tery_4479"/>
<dbReference type="eggNOG" id="COG0761">
    <property type="taxonomic scope" value="Bacteria"/>
</dbReference>
<dbReference type="HOGENOM" id="CLU_027486_4_0_3"/>
<dbReference type="OrthoDB" id="9804077at2"/>
<dbReference type="UniPathway" id="UPA00056">
    <property type="reaction ID" value="UER00097"/>
</dbReference>
<dbReference type="UniPathway" id="UPA00059">
    <property type="reaction ID" value="UER00105"/>
</dbReference>
<dbReference type="GO" id="GO:0051539">
    <property type="term" value="F:4 iron, 4 sulfur cluster binding"/>
    <property type="evidence" value="ECO:0007669"/>
    <property type="project" value="UniProtKB-UniRule"/>
</dbReference>
<dbReference type="GO" id="GO:0051745">
    <property type="term" value="F:4-hydroxy-3-methylbut-2-enyl diphosphate reductase activity"/>
    <property type="evidence" value="ECO:0007669"/>
    <property type="project" value="UniProtKB-UniRule"/>
</dbReference>
<dbReference type="GO" id="GO:0046872">
    <property type="term" value="F:metal ion binding"/>
    <property type="evidence" value="ECO:0007669"/>
    <property type="project" value="UniProtKB-KW"/>
</dbReference>
<dbReference type="GO" id="GO:0050992">
    <property type="term" value="P:dimethylallyl diphosphate biosynthetic process"/>
    <property type="evidence" value="ECO:0007669"/>
    <property type="project" value="UniProtKB-UniRule"/>
</dbReference>
<dbReference type="GO" id="GO:0019288">
    <property type="term" value="P:isopentenyl diphosphate biosynthetic process, methylerythritol 4-phosphate pathway"/>
    <property type="evidence" value="ECO:0007669"/>
    <property type="project" value="UniProtKB-UniRule"/>
</dbReference>
<dbReference type="GO" id="GO:0016114">
    <property type="term" value="P:terpenoid biosynthetic process"/>
    <property type="evidence" value="ECO:0007669"/>
    <property type="project" value="UniProtKB-UniRule"/>
</dbReference>
<dbReference type="CDD" id="cd13944">
    <property type="entry name" value="lytB_ispH"/>
    <property type="match status" value="1"/>
</dbReference>
<dbReference type="Gene3D" id="3.40.50.11270">
    <property type="match status" value="1"/>
</dbReference>
<dbReference type="Gene3D" id="3.40.1010.20">
    <property type="entry name" value="4-hydroxy-3-methylbut-2-enyl diphosphate reductase, catalytic domain"/>
    <property type="match status" value="2"/>
</dbReference>
<dbReference type="HAMAP" id="MF_00191">
    <property type="entry name" value="IspH"/>
    <property type="match status" value="1"/>
</dbReference>
<dbReference type="InterPro" id="IPR003451">
    <property type="entry name" value="LytB/IspH"/>
</dbReference>
<dbReference type="NCBIfam" id="TIGR00216">
    <property type="entry name" value="ispH_lytB"/>
    <property type="match status" value="1"/>
</dbReference>
<dbReference type="NCBIfam" id="NF009911">
    <property type="entry name" value="PRK13371.1"/>
    <property type="match status" value="1"/>
</dbReference>
<dbReference type="PANTHER" id="PTHR31619">
    <property type="entry name" value="4-HYDROXY-3-METHYLBUT-2-ENYL DIPHOSPHATE REDUCTASE, CHLOROPLASTIC"/>
    <property type="match status" value="1"/>
</dbReference>
<dbReference type="PANTHER" id="PTHR31619:SF5">
    <property type="entry name" value="4-HYDROXY-3-METHYLBUT-2-ENYL DIPHOSPHATE REDUCTASE, CHLOROPLASTIC"/>
    <property type="match status" value="1"/>
</dbReference>
<dbReference type="Pfam" id="PF02401">
    <property type="entry name" value="LYTB"/>
    <property type="match status" value="1"/>
</dbReference>
<reference key="1">
    <citation type="journal article" date="2015" name="Proc. Natl. Acad. Sci. U.S.A.">
        <title>Trichodesmium genome maintains abundant, widespread noncoding DNA in situ, despite oligotrophic lifestyle.</title>
        <authorList>
            <person name="Walworth N."/>
            <person name="Pfreundt U."/>
            <person name="Nelson W.C."/>
            <person name="Mincer T."/>
            <person name="Heidelberg J.F."/>
            <person name="Fu F."/>
            <person name="Waterbury J.B."/>
            <person name="Glavina del Rio T."/>
            <person name="Goodwin L."/>
            <person name="Kyrpides N.C."/>
            <person name="Land M.L."/>
            <person name="Woyke T."/>
            <person name="Hutchins D.A."/>
            <person name="Hess W.R."/>
            <person name="Webb E.A."/>
        </authorList>
    </citation>
    <scope>NUCLEOTIDE SEQUENCE [LARGE SCALE GENOMIC DNA]</scope>
    <source>
        <strain>IMS101</strain>
    </source>
</reference>
<name>ISPH_TRIEI</name>
<proteinExistence type="inferred from homology"/>
<organism>
    <name type="scientific">Trichodesmium erythraeum (strain IMS101)</name>
    <dbReference type="NCBI Taxonomy" id="203124"/>
    <lineage>
        <taxon>Bacteria</taxon>
        <taxon>Bacillati</taxon>
        <taxon>Cyanobacteriota</taxon>
        <taxon>Cyanophyceae</taxon>
        <taxon>Oscillatoriophycideae</taxon>
        <taxon>Oscillatoriales</taxon>
        <taxon>Microcoleaceae</taxon>
        <taxon>Trichodesmium</taxon>
    </lineage>
</organism>
<gene>
    <name evidence="1" type="primary">ispH</name>
    <name type="ordered locus">Tery_4479</name>
</gene>
<protein>
    <recommendedName>
        <fullName evidence="1">4-hydroxy-3-methylbut-2-enyl diphosphate reductase</fullName>
        <shortName evidence="1">HMBPP reductase</shortName>
        <ecNumber evidence="1">1.17.7.4</ecNumber>
    </recommendedName>
</protein>
<comment type="function">
    <text evidence="1">Catalyzes the conversion of 1-hydroxy-2-methyl-2-(E)-butenyl 4-diphosphate (HMBPP) into a mixture of isopentenyl diphosphate (IPP) and dimethylallyl diphosphate (DMAPP). Acts in the terminal step of the DOXP/MEP pathway for isoprenoid precursor biosynthesis.</text>
</comment>
<comment type="catalytic activity">
    <reaction evidence="1">
        <text>isopentenyl diphosphate + 2 oxidized [2Fe-2S]-[ferredoxin] + H2O = (2E)-4-hydroxy-3-methylbut-2-enyl diphosphate + 2 reduced [2Fe-2S]-[ferredoxin] + 2 H(+)</text>
        <dbReference type="Rhea" id="RHEA:24488"/>
        <dbReference type="Rhea" id="RHEA-COMP:10000"/>
        <dbReference type="Rhea" id="RHEA-COMP:10001"/>
        <dbReference type="ChEBI" id="CHEBI:15377"/>
        <dbReference type="ChEBI" id="CHEBI:15378"/>
        <dbReference type="ChEBI" id="CHEBI:33737"/>
        <dbReference type="ChEBI" id="CHEBI:33738"/>
        <dbReference type="ChEBI" id="CHEBI:128753"/>
        <dbReference type="ChEBI" id="CHEBI:128769"/>
        <dbReference type="EC" id="1.17.7.4"/>
    </reaction>
</comment>
<comment type="catalytic activity">
    <reaction evidence="1">
        <text>dimethylallyl diphosphate + 2 oxidized [2Fe-2S]-[ferredoxin] + H2O = (2E)-4-hydroxy-3-methylbut-2-enyl diphosphate + 2 reduced [2Fe-2S]-[ferredoxin] + 2 H(+)</text>
        <dbReference type="Rhea" id="RHEA:24825"/>
        <dbReference type="Rhea" id="RHEA-COMP:10000"/>
        <dbReference type="Rhea" id="RHEA-COMP:10001"/>
        <dbReference type="ChEBI" id="CHEBI:15377"/>
        <dbReference type="ChEBI" id="CHEBI:15378"/>
        <dbReference type="ChEBI" id="CHEBI:33737"/>
        <dbReference type="ChEBI" id="CHEBI:33738"/>
        <dbReference type="ChEBI" id="CHEBI:57623"/>
        <dbReference type="ChEBI" id="CHEBI:128753"/>
        <dbReference type="EC" id="1.17.7.4"/>
    </reaction>
</comment>
<comment type="cofactor">
    <cofactor evidence="1">
        <name>[4Fe-4S] cluster</name>
        <dbReference type="ChEBI" id="CHEBI:49883"/>
    </cofactor>
    <text evidence="1">Binds 1 [4Fe-4S] cluster per subunit.</text>
</comment>
<comment type="pathway">
    <text evidence="1">Isoprenoid biosynthesis; dimethylallyl diphosphate biosynthesis; dimethylallyl diphosphate from (2E)-4-hydroxy-3-methylbutenyl diphosphate: step 1/1.</text>
</comment>
<comment type="pathway">
    <text evidence="1">Isoprenoid biosynthesis; isopentenyl diphosphate biosynthesis via DXP pathway; isopentenyl diphosphate from 1-deoxy-D-xylulose 5-phosphate: step 6/6.</text>
</comment>
<comment type="similarity">
    <text evidence="1">Belongs to the IspH family.</text>
</comment>
<accession>Q10WA8</accession>
<evidence type="ECO:0000255" key="1">
    <source>
        <dbReference type="HAMAP-Rule" id="MF_00191"/>
    </source>
</evidence>
<keyword id="KW-0004">4Fe-4S</keyword>
<keyword id="KW-0408">Iron</keyword>
<keyword id="KW-0411">Iron-sulfur</keyword>
<keyword id="KW-0414">Isoprene biosynthesis</keyword>
<keyword id="KW-0479">Metal-binding</keyword>
<keyword id="KW-0560">Oxidoreductase</keyword>
<sequence>MDTKAFTRALKKSENYNRQGFGHAQEVATLMQSAYKSNLIQQIRENNYTLQRGEVTIKLAKTFGFCWGVERSVAMAYETRQHFPNQQIWISYELIHNPSVNQDMKDMEIKFIPVIDGQKDFSVAGNNDVVILPAFGASVQEMQILKDKNCQIVDTTCPWVSKVWNSIEKHKKKKFTSIIHGKYSHAETIATSSFADKYLIVLNMTQAQYVCNYILNGGNRDEFLAKFKQAYSEGFDPDLDLEQVGIANQTTMLKTETEEIGKLFERTMMKKYRPDQLNAHYQNFNTICDATQERQDAIAGLFNEKLDLMVVIGGFNSSNTTHLQEMAIENGIPSYHIDGAQRILSRNKIEHKPLGREVKISEGWLPEGPVVVGLTSGASTPDQAVEDTINKIVAMKLVVMN</sequence>